<protein>
    <recommendedName>
        <fullName>MICOS complex subunit MIC60</fullName>
    </recommendedName>
    <alternativeName>
        <fullName>Mitofilin</fullName>
    </alternativeName>
</protein>
<sequence>MIRTSVRRVVVNSNKFDVRSISNSSIRFNVPNNQRTPPPAVRPPTSPIIVTEGGPKGGSQKQKKKFSFAGFLFKTAFWASVVYGGTLFVATKNDKVMDFIMDKQPPYYEELLNVIEHGSIEDLKRQLRDTQHKISNFDFKLPSKAKIDEFTHELESRGENLIEETKRKLGTSTGAKPRQAIPEGNSAPTPAEQLQKPVETIHKTVDHLPLIQLDKGIASSVDSSIKSTIKSFNDLILSIDAGSQSGNESLMREITENVSKLSSKLNKLTSSFDEELSSKLKISQSELLSSYTKKELELTENLLHQFHHEKAQMEKKLGSRLDQEIEATKQTISQAAVNAVSMMRVEQTKNFEKLIKGKIDQERDGRLANLDKLNSRITELENFSTSLESQLVANHQKSLIQQSLTKLKSLLLGASSEQEKPRLISPYVDNLAKVSHESKDELIALALQDLQPLLSRESTQSILSTPQLLTRWEQLVPELRSASLLPPNAGLLGHLSSMLFSKLLFPVKGAKPDGKDIESVIGRVESSLARGELDVAVEEAANLKGWSRKLADDWVKEGRKKLEIEFLMKIIDAESKIL</sequence>
<reference key="1">
    <citation type="journal article" date="2004" name="Nature">
        <title>Genome evolution in yeasts.</title>
        <authorList>
            <person name="Dujon B."/>
            <person name="Sherman D."/>
            <person name="Fischer G."/>
            <person name="Durrens P."/>
            <person name="Casaregola S."/>
            <person name="Lafontaine I."/>
            <person name="de Montigny J."/>
            <person name="Marck C."/>
            <person name="Neuveglise C."/>
            <person name="Talla E."/>
            <person name="Goffard N."/>
            <person name="Frangeul L."/>
            <person name="Aigle M."/>
            <person name="Anthouard V."/>
            <person name="Babour A."/>
            <person name="Barbe V."/>
            <person name="Barnay S."/>
            <person name="Blanchin S."/>
            <person name="Beckerich J.-M."/>
            <person name="Beyne E."/>
            <person name="Bleykasten C."/>
            <person name="Boisrame A."/>
            <person name="Boyer J."/>
            <person name="Cattolico L."/>
            <person name="Confanioleri F."/>
            <person name="de Daruvar A."/>
            <person name="Despons L."/>
            <person name="Fabre E."/>
            <person name="Fairhead C."/>
            <person name="Ferry-Dumazet H."/>
            <person name="Groppi A."/>
            <person name="Hantraye F."/>
            <person name="Hennequin C."/>
            <person name="Jauniaux N."/>
            <person name="Joyet P."/>
            <person name="Kachouri R."/>
            <person name="Kerrest A."/>
            <person name="Koszul R."/>
            <person name="Lemaire M."/>
            <person name="Lesur I."/>
            <person name="Ma L."/>
            <person name="Muller H."/>
            <person name="Nicaud J.-M."/>
            <person name="Nikolski M."/>
            <person name="Oztas S."/>
            <person name="Ozier-Kalogeropoulos O."/>
            <person name="Pellenz S."/>
            <person name="Potier S."/>
            <person name="Richard G.-F."/>
            <person name="Straub M.-L."/>
            <person name="Suleau A."/>
            <person name="Swennen D."/>
            <person name="Tekaia F."/>
            <person name="Wesolowski-Louvel M."/>
            <person name="Westhof E."/>
            <person name="Wirth B."/>
            <person name="Zeniou-Meyer M."/>
            <person name="Zivanovic Y."/>
            <person name="Bolotin-Fukuhara M."/>
            <person name="Thierry A."/>
            <person name="Bouchier C."/>
            <person name="Caudron B."/>
            <person name="Scarpelli C."/>
            <person name="Gaillardin C."/>
            <person name="Weissenbach J."/>
            <person name="Wincker P."/>
            <person name="Souciet J.-L."/>
        </authorList>
    </citation>
    <scope>NUCLEOTIDE SEQUENCE [LARGE SCALE GENOMIC DNA]</scope>
    <source>
        <strain>ATCC 36239 / CBS 767 / BCRC 21394 / JCM 1990 / NBRC 0083 / IGC 2968</strain>
    </source>
</reference>
<evidence type="ECO:0000250" key="1"/>
<evidence type="ECO:0000255" key="2"/>
<evidence type="ECO:0000256" key="3">
    <source>
        <dbReference type="SAM" id="MobiDB-lite"/>
    </source>
</evidence>
<evidence type="ECO:0000305" key="4"/>
<keyword id="KW-0175">Coiled coil</keyword>
<keyword id="KW-0472">Membrane</keyword>
<keyword id="KW-0496">Mitochondrion</keyword>
<keyword id="KW-0999">Mitochondrion inner membrane</keyword>
<keyword id="KW-1185">Reference proteome</keyword>
<keyword id="KW-0809">Transit peptide</keyword>
<keyword id="KW-0812">Transmembrane</keyword>
<keyword id="KW-1133">Transmembrane helix</keyword>
<organism>
    <name type="scientific">Debaryomyces hansenii (strain ATCC 36239 / CBS 767 / BCRC 21394 / JCM 1990 / NBRC 0083 / IGC 2968)</name>
    <name type="common">Yeast</name>
    <name type="synonym">Torulaspora hansenii</name>
    <dbReference type="NCBI Taxonomy" id="284592"/>
    <lineage>
        <taxon>Eukaryota</taxon>
        <taxon>Fungi</taxon>
        <taxon>Dikarya</taxon>
        <taxon>Ascomycota</taxon>
        <taxon>Saccharomycotina</taxon>
        <taxon>Pichiomycetes</taxon>
        <taxon>Debaryomycetaceae</taxon>
        <taxon>Debaryomyces</taxon>
    </lineage>
</organism>
<gene>
    <name type="primary">MIC60</name>
    <name type="ordered locus">DEHA2B01716g</name>
</gene>
<feature type="transit peptide" description="Mitochondrion" evidence="2">
    <location>
        <begin position="1"/>
        <end position="28"/>
    </location>
</feature>
<feature type="chain" id="PRO_0000406654" description="MICOS complex subunit MIC60">
    <location>
        <begin position="29"/>
        <end position="578"/>
    </location>
</feature>
<feature type="topological domain" description="Mitochondrial matrix" evidence="2">
    <location>
        <begin position="29"/>
        <end position="68"/>
    </location>
</feature>
<feature type="transmembrane region" description="Helical" evidence="2">
    <location>
        <begin position="69"/>
        <end position="91"/>
    </location>
</feature>
<feature type="topological domain" description="Mitochondrial intermembrane" evidence="2">
    <location>
        <begin position="92"/>
        <end position="578"/>
    </location>
</feature>
<feature type="region of interest" description="Disordered" evidence="3">
    <location>
        <begin position="169"/>
        <end position="191"/>
    </location>
</feature>
<feature type="coiled-coil region" evidence="2">
    <location>
        <begin position="248"/>
        <end position="317"/>
    </location>
</feature>
<proteinExistence type="inferred from homology"/>
<name>MIC60_DEBHA</name>
<comment type="function">
    <text evidence="1">Component of the MICOS complex, a large protein complex of the mitochondrial inner membrane that plays crucial roles in the maintenance of crista junctions, inner membrane architecture, and formation of contact sites to the outer membrane. Plays a role in keeping cristae membranes connected to the inner boundary membrane. Also promotes protein import via the mitochondrial intermembrane space assembly (MIA) pathway (By similarity).</text>
</comment>
<comment type="subunit">
    <text evidence="1">Component of the mitochondrial contact site and cristae organizing system (MICOS) complex.</text>
</comment>
<comment type="subcellular location">
    <subcellularLocation>
        <location evidence="1">Mitochondrion inner membrane</location>
        <topology evidence="1">Single-pass membrane protein</topology>
    </subcellularLocation>
</comment>
<comment type="similarity">
    <text evidence="4">Belongs to the MICOS complex subunit Mic60 family.</text>
</comment>
<accession>Q6BXM9</accession>
<dbReference type="EMBL" id="CR382134">
    <property type="protein sequence ID" value="CAG85026.2"/>
    <property type="molecule type" value="Genomic_DNA"/>
</dbReference>
<dbReference type="RefSeq" id="XP_457040.2">
    <property type="nucleotide sequence ID" value="XM_457040.1"/>
</dbReference>
<dbReference type="SMR" id="Q6BXM9"/>
<dbReference type="FunCoup" id="Q6BXM9">
    <property type="interactions" value="213"/>
</dbReference>
<dbReference type="STRING" id="284592.Q6BXM9"/>
<dbReference type="GeneID" id="2913729"/>
<dbReference type="KEGG" id="dha:DEHA2B01716g"/>
<dbReference type="VEuPathDB" id="FungiDB:DEHA2B01716g"/>
<dbReference type="eggNOG" id="KOG1854">
    <property type="taxonomic scope" value="Eukaryota"/>
</dbReference>
<dbReference type="HOGENOM" id="CLU_008024_2_0_1"/>
<dbReference type="InParanoid" id="Q6BXM9"/>
<dbReference type="OMA" id="DYATDAY"/>
<dbReference type="OrthoDB" id="10261039at2759"/>
<dbReference type="Proteomes" id="UP000000599">
    <property type="component" value="Chromosome B"/>
</dbReference>
<dbReference type="GO" id="GO:0061617">
    <property type="term" value="C:MICOS complex"/>
    <property type="evidence" value="ECO:0007669"/>
    <property type="project" value="TreeGrafter"/>
</dbReference>
<dbReference type="GO" id="GO:0042407">
    <property type="term" value="P:cristae formation"/>
    <property type="evidence" value="ECO:0007669"/>
    <property type="project" value="TreeGrafter"/>
</dbReference>
<dbReference type="InterPro" id="IPR019133">
    <property type="entry name" value="MIC60"/>
</dbReference>
<dbReference type="PANTHER" id="PTHR15415:SF7">
    <property type="entry name" value="MICOS COMPLEX SUBUNIT MIC60"/>
    <property type="match status" value="1"/>
</dbReference>
<dbReference type="PANTHER" id="PTHR15415">
    <property type="entry name" value="MITOFILIN"/>
    <property type="match status" value="1"/>
</dbReference>
<dbReference type="Pfam" id="PF09731">
    <property type="entry name" value="Mitofilin"/>
    <property type="match status" value="1"/>
</dbReference>